<protein>
    <recommendedName>
        <fullName evidence="1">Dihydroxy-acid dehydratase</fullName>
        <shortName evidence="1">DAD</shortName>
        <ecNumber evidence="1">4.2.1.9</ecNumber>
    </recommendedName>
</protein>
<keyword id="KW-0001">2Fe-2S</keyword>
<keyword id="KW-0028">Amino-acid biosynthesis</keyword>
<keyword id="KW-0100">Branched-chain amino acid biosynthesis</keyword>
<keyword id="KW-0408">Iron</keyword>
<keyword id="KW-0411">Iron-sulfur</keyword>
<keyword id="KW-0456">Lyase</keyword>
<keyword id="KW-0460">Magnesium</keyword>
<keyword id="KW-0479">Metal-binding</keyword>
<reference key="1">
    <citation type="submission" date="2007-06" db="EMBL/GenBank/DDBJ databases">
        <title>Complete sequence of chromosome of Staphylococcus aureus subsp. aureus JH1.</title>
        <authorList>
            <consortium name="US DOE Joint Genome Institute"/>
            <person name="Copeland A."/>
            <person name="Lucas S."/>
            <person name="Lapidus A."/>
            <person name="Barry K."/>
            <person name="Detter J.C."/>
            <person name="Glavina del Rio T."/>
            <person name="Hammon N."/>
            <person name="Israni S."/>
            <person name="Dalin E."/>
            <person name="Tice H."/>
            <person name="Pitluck S."/>
            <person name="Chain P."/>
            <person name="Malfatti S."/>
            <person name="Shin M."/>
            <person name="Vergez L."/>
            <person name="Schmutz J."/>
            <person name="Larimer F."/>
            <person name="Land M."/>
            <person name="Hauser L."/>
            <person name="Kyrpides N."/>
            <person name="Ivanova N."/>
            <person name="Tomasz A."/>
            <person name="Richardson P."/>
        </authorList>
    </citation>
    <scope>NUCLEOTIDE SEQUENCE [LARGE SCALE GENOMIC DNA]</scope>
    <source>
        <strain>JH1</strain>
    </source>
</reference>
<name>ILVD_STAA2</name>
<proteinExistence type="inferred from homology"/>
<sequence>MRSDMIKKGDHQAPARSLLHATGALKSPTDMNKPFVAICNSYIDIVPGHVHLRELADIAKEAIREAGAIPFEFNTIGVDDGIAMGHIGMRYSLPSREIIADAAETVINAHWFDGVFYIPNCDKITPGMILAAMRTNVPAIFCSGGPMKAGLSAHGKALTLSSMFEAVGAFKEGSISKEEFLDMEQNACPTCGSCAGMFTANSMNCLMEVLGLALPYNGTALAVSDQRREMIRQAAFKLVENIKNDLKPRDIVTREAIDDAFALDMAMGGSTNTVLHTLAIANEAGIDYDLERINAIAKRTPYLSKIAPSSSYSMHDVHEAGGVPAIINELMKKDGTLHPDRITVTGKTLRENNEGKEIKNFDVIHPLDAPYDAQGGLSILFGNIAPKGAVIKVGGVDPSIKTFTGKAICFNSHDEAVEAIDNRTVRAGHVVVIRYEGPKGGPGMPEMLAPTSSIVGRGLGKDVALITDGRFSGATRGIAVGHISPEAASGGPIALIEDGDEITIDLTNRTLNVNQPEDVLARRRESLTPFKAKVKTGYLARYTALVTSANTGGVMQVPENLI</sequence>
<evidence type="ECO:0000255" key="1">
    <source>
        <dbReference type="HAMAP-Rule" id="MF_00012"/>
    </source>
</evidence>
<accession>A6U3D8</accession>
<feature type="chain" id="PRO_1000073992" description="Dihydroxy-acid dehydratase">
    <location>
        <begin position="1"/>
        <end position="562"/>
    </location>
</feature>
<feature type="active site" description="Proton acceptor" evidence="1">
    <location>
        <position position="472"/>
    </location>
</feature>
<feature type="binding site" evidence="1">
    <location>
        <position position="80"/>
    </location>
    <ligand>
        <name>Mg(2+)</name>
        <dbReference type="ChEBI" id="CHEBI:18420"/>
    </ligand>
</feature>
<feature type="binding site" evidence="1">
    <location>
        <position position="121"/>
    </location>
    <ligand>
        <name>[2Fe-2S] cluster</name>
        <dbReference type="ChEBI" id="CHEBI:190135"/>
    </ligand>
</feature>
<feature type="binding site" evidence="1">
    <location>
        <position position="122"/>
    </location>
    <ligand>
        <name>Mg(2+)</name>
        <dbReference type="ChEBI" id="CHEBI:18420"/>
    </ligand>
</feature>
<feature type="binding site" description="via carbamate group" evidence="1">
    <location>
        <position position="123"/>
    </location>
    <ligand>
        <name>Mg(2+)</name>
        <dbReference type="ChEBI" id="CHEBI:18420"/>
    </ligand>
</feature>
<feature type="binding site" evidence="1">
    <location>
        <position position="194"/>
    </location>
    <ligand>
        <name>[2Fe-2S] cluster</name>
        <dbReference type="ChEBI" id="CHEBI:190135"/>
    </ligand>
</feature>
<feature type="binding site" evidence="1">
    <location>
        <position position="446"/>
    </location>
    <ligand>
        <name>Mg(2+)</name>
        <dbReference type="ChEBI" id="CHEBI:18420"/>
    </ligand>
</feature>
<feature type="modified residue" description="N6-carboxylysine" evidence="1">
    <location>
        <position position="123"/>
    </location>
</feature>
<comment type="function">
    <text evidence="1">Functions in the biosynthesis of branched-chain amino acids. Catalyzes the dehydration of (2R,3R)-2,3-dihydroxy-3-methylpentanoate (2,3-dihydroxy-3-methylvalerate) into 2-oxo-3-methylpentanoate (2-oxo-3-methylvalerate) and of (2R)-2,3-dihydroxy-3-methylbutanoate (2,3-dihydroxyisovalerate) into 2-oxo-3-methylbutanoate (2-oxoisovalerate), the penultimate precursor to L-isoleucine and L-valine, respectively.</text>
</comment>
<comment type="catalytic activity">
    <reaction evidence="1">
        <text>(2R)-2,3-dihydroxy-3-methylbutanoate = 3-methyl-2-oxobutanoate + H2O</text>
        <dbReference type="Rhea" id="RHEA:24809"/>
        <dbReference type="ChEBI" id="CHEBI:11851"/>
        <dbReference type="ChEBI" id="CHEBI:15377"/>
        <dbReference type="ChEBI" id="CHEBI:49072"/>
        <dbReference type="EC" id="4.2.1.9"/>
    </reaction>
    <physiologicalReaction direction="left-to-right" evidence="1">
        <dbReference type="Rhea" id="RHEA:24810"/>
    </physiologicalReaction>
</comment>
<comment type="catalytic activity">
    <reaction evidence="1">
        <text>(2R,3R)-2,3-dihydroxy-3-methylpentanoate = (S)-3-methyl-2-oxopentanoate + H2O</text>
        <dbReference type="Rhea" id="RHEA:27694"/>
        <dbReference type="ChEBI" id="CHEBI:15377"/>
        <dbReference type="ChEBI" id="CHEBI:35146"/>
        <dbReference type="ChEBI" id="CHEBI:49258"/>
        <dbReference type="EC" id="4.2.1.9"/>
    </reaction>
    <physiologicalReaction direction="left-to-right" evidence="1">
        <dbReference type="Rhea" id="RHEA:27695"/>
    </physiologicalReaction>
</comment>
<comment type="cofactor">
    <cofactor evidence="1">
        <name>[2Fe-2S] cluster</name>
        <dbReference type="ChEBI" id="CHEBI:190135"/>
    </cofactor>
    <text evidence="1">Binds 1 [2Fe-2S] cluster per subunit. This cluster acts as a Lewis acid cofactor.</text>
</comment>
<comment type="cofactor">
    <cofactor evidence="1">
        <name>Mg(2+)</name>
        <dbReference type="ChEBI" id="CHEBI:18420"/>
    </cofactor>
</comment>
<comment type="pathway">
    <text evidence="1">Amino-acid biosynthesis; L-isoleucine biosynthesis; L-isoleucine from 2-oxobutanoate: step 3/4.</text>
</comment>
<comment type="pathway">
    <text evidence="1">Amino-acid biosynthesis; L-valine biosynthesis; L-valine from pyruvate: step 3/4.</text>
</comment>
<comment type="subunit">
    <text evidence="1">Homodimer.</text>
</comment>
<comment type="similarity">
    <text evidence="1">Belongs to the IlvD/Edd family.</text>
</comment>
<organism>
    <name type="scientific">Staphylococcus aureus (strain JH1)</name>
    <dbReference type="NCBI Taxonomy" id="359787"/>
    <lineage>
        <taxon>Bacteria</taxon>
        <taxon>Bacillati</taxon>
        <taxon>Bacillota</taxon>
        <taxon>Bacilli</taxon>
        <taxon>Bacillales</taxon>
        <taxon>Staphylococcaceae</taxon>
        <taxon>Staphylococcus</taxon>
    </lineage>
</organism>
<dbReference type="EC" id="4.2.1.9" evidence="1"/>
<dbReference type="EMBL" id="CP000736">
    <property type="protein sequence ID" value="ABR52956.1"/>
    <property type="molecule type" value="Genomic_DNA"/>
</dbReference>
<dbReference type="SMR" id="A6U3D8"/>
<dbReference type="KEGG" id="sah:SaurJH1_2127"/>
<dbReference type="HOGENOM" id="CLU_014271_4_2_9"/>
<dbReference type="UniPathway" id="UPA00047">
    <property type="reaction ID" value="UER00057"/>
</dbReference>
<dbReference type="UniPathway" id="UPA00049">
    <property type="reaction ID" value="UER00061"/>
</dbReference>
<dbReference type="GO" id="GO:0005829">
    <property type="term" value="C:cytosol"/>
    <property type="evidence" value="ECO:0007669"/>
    <property type="project" value="TreeGrafter"/>
</dbReference>
<dbReference type="GO" id="GO:0051537">
    <property type="term" value="F:2 iron, 2 sulfur cluster binding"/>
    <property type="evidence" value="ECO:0007669"/>
    <property type="project" value="UniProtKB-UniRule"/>
</dbReference>
<dbReference type="GO" id="GO:0004160">
    <property type="term" value="F:dihydroxy-acid dehydratase activity"/>
    <property type="evidence" value="ECO:0007669"/>
    <property type="project" value="UniProtKB-UniRule"/>
</dbReference>
<dbReference type="GO" id="GO:0000287">
    <property type="term" value="F:magnesium ion binding"/>
    <property type="evidence" value="ECO:0007669"/>
    <property type="project" value="UniProtKB-UniRule"/>
</dbReference>
<dbReference type="GO" id="GO:0009097">
    <property type="term" value="P:isoleucine biosynthetic process"/>
    <property type="evidence" value="ECO:0007669"/>
    <property type="project" value="UniProtKB-UniRule"/>
</dbReference>
<dbReference type="GO" id="GO:0009099">
    <property type="term" value="P:L-valine biosynthetic process"/>
    <property type="evidence" value="ECO:0007669"/>
    <property type="project" value="UniProtKB-UniRule"/>
</dbReference>
<dbReference type="FunFam" id="3.50.30.80:FF:000001">
    <property type="entry name" value="Dihydroxy-acid dehydratase"/>
    <property type="match status" value="1"/>
</dbReference>
<dbReference type="Gene3D" id="3.50.30.80">
    <property type="entry name" value="IlvD/EDD C-terminal domain-like"/>
    <property type="match status" value="1"/>
</dbReference>
<dbReference type="HAMAP" id="MF_00012">
    <property type="entry name" value="IlvD"/>
    <property type="match status" value="1"/>
</dbReference>
<dbReference type="InterPro" id="IPR042096">
    <property type="entry name" value="Dihydro-acid_dehy_C"/>
</dbReference>
<dbReference type="InterPro" id="IPR004404">
    <property type="entry name" value="DihydroxyA_deHydtase"/>
</dbReference>
<dbReference type="InterPro" id="IPR020558">
    <property type="entry name" value="DiOHA_6PGluconate_deHydtase_CS"/>
</dbReference>
<dbReference type="InterPro" id="IPR056740">
    <property type="entry name" value="ILV_EDD_C"/>
</dbReference>
<dbReference type="InterPro" id="IPR000581">
    <property type="entry name" value="ILV_EDD_N"/>
</dbReference>
<dbReference type="InterPro" id="IPR037237">
    <property type="entry name" value="IlvD/EDD_N"/>
</dbReference>
<dbReference type="NCBIfam" id="TIGR00110">
    <property type="entry name" value="ilvD"/>
    <property type="match status" value="1"/>
</dbReference>
<dbReference type="NCBIfam" id="NF002068">
    <property type="entry name" value="PRK00911.1"/>
    <property type="match status" value="1"/>
</dbReference>
<dbReference type="PANTHER" id="PTHR43661">
    <property type="entry name" value="D-XYLONATE DEHYDRATASE"/>
    <property type="match status" value="1"/>
</dbReference>
<dbReference type="PANTHER" id="PTHR43661:SF3">
    <property type="entry name" value="D-XYLONATE DEHYDRATASE YAGF-RELATED"/>
    <property type="match status" value="1"/>
</dbReference>
<dbReference type="Pfam" id="PF24877">
    <property type="entry name" value="ILV_EDD_C"/>
    <property type="match status" value="1"/>
</dbReference>
<dbReference type="Pfam" id="PF00920">
    <property type="entry name" value="ILVD_EDD_N"/>
    <property type="match status" value="1"/>
</dbReference>
<dbReference type="SUPFAM" id="SSF143975">
    <property type="entry name" value="IlvD/EDD N-terminal domain-like"/>
    <property type="match status" value="1"/>
</dbReference>
<dbReference type="SUPFAM" id="SSF52016">
    <property type="entry name" value="LeuD/IlvD-like"/>
    <property type="match status" value="1"/>
</dbReference>
<dbReference type="PROSITE" id="PS00886">
    <property type="entry name" value="ILVD_EDD_1"/>
    <property type="match status" value="1"/>
</dbReference>
<dbReference type="PROSITE" id="PS00887">
    <property type="entry name" value="ILVD_EDD_2"/>
    <property type="match status" value="1"/>
</dbReference>
<gene>
    <name evidence="1" type="primary">ilvD</name>
    <name type="ordered locus">SaurJH1_2127</name>
</gene>